<comment type="catalytic activity">
    <reaction>
        <text>Endohydrolysis of (1-&gt;4)-beta-D-glucosidic linkages in cellulose, lichenin and cereal beta-D-glucans.</text>
        <dbReference type="EC" id="3.2.1.4"/>
    </reaction>
</comment>
<comment type="similarity">
    <text evidence="7">Belongs to the glycosyl hydrolase 6 (cellulase B) family.</text>
</comment>
<accession>P46236</accession>
<keyword id="KW-0119">Carbohydrate metabolism</keyword>
<keyword id="KW-0136">Cellulose degradation</keyword>
<keyword id="KW-1015">Disulfide bond</keyword>
<keyword id="KW-0325">Glycoprotein</keyword>
<keyword id="KW-0326">Glycosidase</keyword>
<keyword id="KW-0378">Hydrolase</keyword>
<keyword id="KW-0624">Polysaccharide degradation</keyword>
<keyword id="KW-0732">Signal</keyword>
<protein>
    <recommendedName>
        <fullName>Putative endoglucanase type B</fullName>
        <ecNumber>3.2.1.4</ecNumber>
    </recommendedName>
    <alternativeName>
        <fullName>Cellulase</fullName>
    </alternativeName>
    <alternativeName>
        <fullName>Endo-1,4-beta-glucanase</fullName>
    </alternativeName>
</protein>
<reference key="1">
    <citation type="journal article" date="1994" name="Gene">
        <title>The use of conserved cellulase family-specific sequences to clone cellulase homologue cDNAs from Fusarium oxysporum.</title>
        <authorList>
            <person name="Sheppard P.O."/>
            <person name="Grant F.J."/>
            <person name="Oort P.J."/>
            <person name="Sprecher C.A."/>
            <person name="Foster D.C."/>
            <person name="Hagen F.S."/>
            <person name="Upshall A."/>
            <person name="McKnight G.L."/>
            <person name="O'Hara P.J."/>
        </authorList>
    </citation>
    <scope>NUCLEOTIDE SEQUENCE [MRNA]</scope>
</reference>
<name>GUNB_FUSOX</name>
<sequence>MAYKLILAAFAATALAAPVEERQSCSNGVWAQCGGQNWSGTPCCTSGNKCVKLNDFYSQCQPGSAEPSSTAAGPSSTTATKTTATGGSSTTAGGSVTSAPPAASDNPYAGVDLWANNYYRSEVMNLAVPKLSGAKATAAAKVADVPSFQWMDTYDHISLMEDTLADIRKANKAGGKYAGQFVVYDLPNRDCAAAASNGEYSLDKDGANKYKAYIAKIKGILQNYSDTKVILVIEPDSLANLVTNLNVDKCAKAESAYKELTVYAIKELNLPNVSMYLDAGHGGWLGWPANIGPAAKLYAQIYKDAGKPSRVRGLVTNVSNYNGWKLSTKPDYTESNPNYDEQRYINAFAPLLAQEGWSNVKFIVDQGRSGKQPTGQKAQGDWCNAKGTGFGLRPSTNTGDALADAFVWVKPGGESDGTSDTSAARYDYHCGLDDALKPAPEAGTWFQAYFEQLLDNANPSFL</sequence>
<feature type="signal peptide" evidence="2">
    <location>
        <begin position="1"/>
        <end position="16"/>
    </location>
</feature>
<feature type="chain" id="PRO_0000007910" description="Putative endoglucanase type B">
    <location>
        <begin position="17"/>
        <end position="462"/>
    </location>
</feature>
<feature type="domain" description="CBM1" evidence="3">
    <location>
        <begin position="25"/>
        <end position="61"/>
    </location>
</feature>
<feature type="region of interest" description="Disordered" evidence="6">
    <location>
        <begin position="64"/>
        <end position="102"/>
    </location>
</feature>
<feature type="region of interest" description="Linker">
    <location>
        <begin position="66"/>
        <end position="99"/>
    </location>
</feature>
<feature type="region of interest" description="Catalytic">
    <location>
        <begin position="100"/>
        <end position="462"/>
    </location>
</feature>
<feature type="compositionally biased region" description="Low complexity" evidence="6">
    <location>
        <begin position="64"/>
        <end position="100"/>
    </location>
</feature>
<feature type="active site" evidence="4">
    <location>
        <position position="190"/>
    </location>
</feature>
<feature type="active site" description="Proton donor" evidence="5">
    <location>
        <position position="236"/>
    </location>
</feature>
<feature type="active site" description="Nucleophile" evidence="4">
    <location>
        <position position="416"/>
    </location>
</feature>
<feature type="glycosylation site" description="N-linked (GlcNAc...) asparagine" evidence="2">
    <location>
        <position position="37"/>
    </location>
</feature>
<feature type="glycosylation site" description="N-linked (GlcNAc...) asparagine" evidence="2">
    <location>
        <position position="223"/>
    </location>
</feature>
<feature type="glycosylation site" description="N-linked (GlcNAc...) asparagine" evidence="2">
    <location>
        <position position="272"/>
    </location>
</feature>
<feature type="glycosylation site" description="N-linked (GlcNAc...) asparagine" evidence="2">
    <location>
        <position position="317"/>
    </location>
</feature>
<feature type="disulfide bond" evidence="1">
    <location>
        <begin position="33"/>
        <end position="50"/>
    </location>
</feature>
<feature type="disulfide bond" evidence="1">
    <location>
        <begin position="44"/>
        <end position="60"/>
    </location>
</feature>
<feature type="disulfide bond" evidence="1">
    <location>
        <begin position="191"/>
        <end position="250"/>
    </location>
</feature>
<feature type="disulfide bond" evidence="1">
    <location>
        <begin position="383"/>
        <end position="430"/>
    </location>
</feature>
<evidence type="ECO:0000250" key="1"/>
<evidence type="ECO:0000255" key="2"/>
<evidence type="ECO:0000255" key="3">
    <source>
        <dbReference type="PROSITE-ProRule" id="PRU00597"/>
    </source>
</evidence>
<evidence type="ECO:0000255" key="4">
    <source>
        <dbReference type="PROSITE-ProRule" id="PRU10056"/>
    </source>
</evidence>
<evidence type="ECO:0000255" key="5">
    <source>
        <dbReference type="PROSITE-ProRule" id="PRU10057"/>
    </source>
</evidence>
<evidence type="ECO:0000256" key="6">
    <source>
        <dbReference type="SAM" id="MobiDB-lite"/>
    </source>
</evidence>
<evidence type="ECO:0000305" key="7"/>
<organism>
    <name type="scientific">Fusarium oxysporum</name>
    <name type="common">Fusarium vascular wilt</name>
    <dbReference type="NCBI Taxonomy" id="5507"/>
    <lineage>
        <taxon>Eukaryota</taxon>
        <taxon>Fungi</taxon>
        <taxon>Dikarya</taxon>
        <taxon>Ascomycota</taxon>
        <taxon>Pezizomycotina</taxon>
        <taxon>Sordariomycetes</taxon>
        <taxon>Hypocreomycetidae</taxon>
        <taxon>Hypocreales</taxon>
        <taxon>Nectriaceae</taxon>
        <taxon>Fusarium</taxon>
        <taxon>Fusarium oxysporum species complex</taxon>
    </lineage>
</organism>
<dbReference type="EC" id="3.2.1.4"/>
<dbReference type="EMBL" id="L29377">
    <property type="protein sequence ID" value="AAA65585.1"/>
    <property type="molecule type" value="mRNA"/>
</dbReference>
<dbReference type="SMR" id="P46236"/>
<dbReference type="CAZy" id="CBM1">
    <property type="family name" value="Carbohydrate-Binding Module Family 1"/>
</dbReference>
<dbReference type="CAZy" id="GH6">
    <property type="family name" value="Glycoside Hydrolase Family 6"/>
</dbReference>
<dbReference type="VEuPathDB" id="FungiDB:FOC1_g10002687"/>
<dbReference type="VEuPathDB" id="FungiDB:FOC4_g10009603"/>
<dbReference type="VEuPathDB" id="FungiDB:FOIG_13447"/>
<dbReference type="VEuPathDB" id="FungiDB:FOMG_14546"/>
<dbReference type="VEuPathDB" id="FungiDB:FOXG_09643"/>
<dbReference type="VEuPathDB" id="FungiDB:FOZG_13867"/>
<dbReference type="VEuPathDB" id="FungiDB:HZS61_005819"/>
<dbReference type="GO" id="GO:0005576">
    <property type="term" value="C:extracellular region"/>
    <property type="evidence" value="ECO:0007669"/>
    <property type="project" value="InterPro"/>
</dbReference>
<dbReference type="GO" id="GO:0008810">
    <property type="term" value="F:cellulase activity"/>
    <property type="evidence" value="ECO:0007669"/>
    <property type="project" value="UniProtKB-EC"/>
</dbReference>
<dbReference type="GO" id="GO:0030248">
    <property type="term" value="F:cellulose binding"/>
    <property type="evidence" value="ECO:0007669"/>
    <property type="project" value="InterPro"/>
</dbReference>
<dbReference type="GO" id="GO:0030245">
    <property type="term" value="P:cellulose catabolic process"/>
    <property type="evidence" value="ECO:0007669"/>
    <property type="project" value="UniProtKB-KW"/>
</dbReference>
<dbReference type="FunFam" id="3.20.20.40:FF:000001">
    <property type="entry name" value="Glucanase"/>
    <property type="match status" value="1"/>
</dbReference>
<dbReference type="Gene3D" id="3.20.20.40">
    <property type="entry name" value="1, 4-beta cellobiohydrolase"/>
    <property type="match status" value="1"/>
</dbReference>
<dbReference type="InterPro" id="IPR016288">
    <property type="entry name" value="Beta_cellobiohydrolase"/>
</dbReference>
<dbReference type="InterPro" id="IPR036434">
    <property type="entry name" value="Beta_cellobiohydrolase_sf"/>
</dbReference>
<dbReference type="InterPro" id="IPR035971">
    <property type="entry name" value="CBD_sf"/>
</dbReference>
<dbReference type="InterPro" id="IPR000254">
    <property type="entry name" value="Cellulose-bd_dom_fun"/>
</dbReference>
<dbReference type="InterPro" id="IPR001524">
    <property type="entry name" value="Glyco_hydro_6_CS"/>
</dbReference>
<dbReference type="PANTHER" id="PTHR34876">
    <property type="match status" value="1"/>
</dbReference>
<dbReference type="PANTHER" id="PTHR34876:SF4">
    <property type="entry name" value="1,4-BETA-D-GLUCAN CELLOBIOHYDROLASE C-RELATED"/>
    <property type="match status" value="1"/>
</dbReference>
<dbReference type="Pfam" id="PF00734">
    <property type="entry name" value="CBM_1"/>
    <property type="match status" value="1"/>
</dbReference>
<dbReference type="Pfam" id="PF01341">
    <property type="entry name" value="Glyco_hydro_6"/>
    <property type="match status" value="1"/>
</dbReference>
<dbReference type="PIRSF" id="PIRSF001100">
    <property type="entry name" value="Beta_cellobiohydrolase"/>
    <property type="match status" value="1"/>
</dbReference>
<dbReference type="PRINTS" id="PR00733">
    <property type="entry name" value="GLHYDRLASE6"/>
</dbReference>
<dbReference type="SMART" id="SM00236">
    <property type="entry name" value="fCBD"/>
    <property type="match status" value="1"/>
</dbReference>
<dbReference type="SUPFAM" id="SSF57180">
    <property type="entry name" value="Cellulose-binding domain"/>
    <property type="match status" value="1"/>
</dbReference>
<dbReference type="SUPFAM" id="SSF51989">
    <property type="entry name" value="Glycosyl hydrolases family 6, cellulases"/>
    <property type="match status" value="1"/>
</dbReference>
<dbReference type="PROSITE" id="PS00562">
    <property type="entry name" value="CBM1_1"/>
    <property type="match status" value="1"/>
</dbReference>
<dbReference type="PROSITE" id="PS51164">
    <property type="entry name" value="CBM1_2"/>
    <property type="match status" value="1"/>
</dbReference>
<dbReference type="PROSITE" id="PS00655">
    <property type="entry name" value="GLYCOSYL_HYDROL_F6_1"/>
    <property type="match status" value="1"/>
</dbReference>
<dbReference type="PROSITE" id="PS00656">
    <property type="entry name" value="GLYCOSYL_HYDROL_F6_2"/>
    <property type="match status" value="1"/>
</dbReference>
<proteinExistence type="evidence at transcript level"/>